<organism>
    <name type="scientific">Gorilla gorilla gorilla</name>
    <name type="common">Western lowland gorilla</name>
    <dbReference type="NCBI Taxonomy" id="9595"/>
    <lineage>
        <taxon>Eukaryota</taxon>
        <taxon>Metazoa</taxon>
        <taxon>Chordata</taxon>
        <taxon>Craniata</taxon>
        <taxon>Vertebrata</taxon>
        <taxon>Euteleostomi</taxon>
        <taxon>Mammalia</taxon>
        <taxon>Eutheria</taxon>
        <taxon>Euarchontoglires</taxon>
        <taxon>Primates</taxon>
        <taxon>Haplorrhini</taxon>
        <taxon>Catarrhini</taxon>
        <taxon>Hominidae</taxon>
        <taxon>Gorilla</taxon>
    </lineage>
</organism>
<comment type="function">
    <text evidence="1">Participates in the formation of a gel matrix (sperm coagulum) entrapping the accessory gland secretions and ejaculated spermatozoa.</text>
</comment>
<comment type="subunit">
    <text evidence="1">Interacts with SERPINA5.</text>
</comment>
<comment type="subcellular location">
    <subcellularLocation>
        <location evidence="1">Secreted</location>
    </subcellularLocation>
</comment>
<comment type="similarity">
    <text evidence="4">Belongs to the semenogelin family.</text>
</comment>
<reference key="1">
    <citation type="journal article" date="2004" name="Nat. Genet.">
        <title>Rate of molecular evolution of the seminal protein gene SEMG2 correlates with levels of female promiscuity.</title>
        <authorList>
            <person name="Dorus S."/>
            <person name="Evans P.D."/>
            <person name="Wyckoff G.J."/>
            <person name="Choi S.S."/>
            <person name="Lahn B.T."/>
        </authorList>
    </citation>
    <scope>NUCLEOTIDE SEQUENCE [MRNA]</scope>
</reference>
<name>SEMG2_GORGO</name>
<feature type="signal peptide" evidence="2">
    <location>
        <begin position="1"/>
        <end position="23"/>
    </location>
</feature>
<feature type="chain" id="PRO_0000032358" description="Semenogelin-2">
    <location>
        <begin position="24"/>
        <end position="474"/>
    </location>
</feature>
<feature type="region of interest" description="Disordered" evidence="3">
    <location>
        <begin position="24"/>
        <end position="62"/>
    </location>
</feature>
<feature type="region of interest" description="Disordered" evidence="3">
    <location>
        <begin position="132"/>
        <end position="158"/>
    </location>
</feature>
<feature type="region of interest" description="Disordered" evidence="3">
    <location>
        <begin position="173"/>
        <end position="194"/>
    </location>
</feature>
<feature type="region of interest" description="Disordered" evidence="3">
    <location>
        <begin position="226"/>
        <end position="247"/>
    </location>
</feature>
<feature type="region of interest" description="Disordered" evidence="3">
    <location>
        <begin position="272"/>
        <end position="474"/>
    </location>
</feature>
<feature type="compositionally biased region" description="Polar residues" evidence="3">
    <location>
        <begin position="31"/>
        <end position="40"/>
    </location>
</feature>
<feature type="compositionally biased region" description="Polar residues" evidence="3">
    <location>
        <begin position="137"/>
        <end position="158"/>
    </location>
</feature>
<feature type="compositionally biased region" description="Polar residues" evidence="3">
    <location>
        <begin position="174"/>
        <end position="194"/>
    </location>
</feature>
<feature type="compositionally biased region" description="Basic and acidic residues" evidence="3">
    <location>
        <begin position="292"/>
        <end position="310"/>
    </location>
</feature>
<feature type="compositionally biased region" description="Polar residues" evidence="3">
    <location>
        <begin position="325"/>
        <end position="334"/>
    </location>
</feature>
<feature type="compositionally biased region" description="Basic and acidic residues" evidence="3">
    <location>
        <begin position="335"/>
        <end position="346"/>
    </location>
</feature>
<feature type="compositionally biased region" description="Polar residues" evidence="3">
    <location>
        <begin position="372"/>
        <end position="397"/>
    </location>
</feature>
<feature type="compositionally biased region" description="Basic and acidic residues" evidence="3">
    <location>
        <begin position="399"/>
        <end position="426"/>
    </location>
</feature>
<feature type="compositionally biased region" description="Polar residues" evidence="3">
    <location>
        <begin position="445"/>
        <end position="455"/>
    </location>
</feature>
<feature type="compositionally biased region" description="Basic and acidic residues" evidence="3">
    <location>
        <begin position="456"/>
        <end position="465"/>
    </location>
</feature>
<accession>Q5U7N3</accession>
<protein>
    <recommendedName>
        <fullName>Semenogelin-2</fullName>
    </recommendedName>
    <alternativeName>
        <fullName>Semenogelin II</fullName>
        <shortName>SGII</shortName>
    </alternativeName>
</protein>
<dbReference type="EMBL" id="AY781387">
    <property type="protein sequence ID" value="AAV51945.1"/>
    <property type="molecule type" value="mRNA"/>
</dbReference>
<dbReference type="SMR" id="Q5U7N3"/>
<dbReference type="FunCoup" id="Q5U7N3">
    <property type="interactions" value="189"/>
</dbReference>
<dbReference type="STRING" id="9593.ENSGGOP00000023843"/>
<dbReference type="eggNOG" id="ENOG502T80H">
    <property type="taxonomic scope" value="Eukaryota"/>
</dbReference>
<dbReference type="InParanoid" id="Q5U7N3"/>
<dbReference type="Proteomes" id="UP000001519">
    <property type="component" value="Unplaced"/>
</dbReference>
<dbReference type="GO" id="GO:0005576">
    <property type="term" value="C:extracellular region"/>
    <property type="evidence" value="ECO:0007669"/>
    <property type="project" value="UniProtKB-SubCell"/>
</dbReference>
<dbReference type="GO" id="GO:0050817">
    <property type="term" value="P:coagulation"/>
    <property type="evidence" value="ECO:0007669"/>
    <property type="project" value="InterPro"/>
</dbReference>
<dbReference type="GO" id="GO:1901318">
    <property type="term" value="P:negative regulation of flagellated sperm motility"/>
    <property type="evidence" value="ECO:0007669"/>
    <property type="project" value="InterPro"/>
</dbReference>
<dbReference type="GO" id="GO:0048240">
    <property type="term" value="P:sperm capacitation"/>
    <property type="evidence" value="ECO:0000318"/>
    <property type="project" value="GO_Central"/>
</dbReference>
<dbReference type="InterPro" id="IPR008836">
    <property type="entry name" value="Semenogelin"/>
</dbReference>
<dbReference type="PANTHER" id="PTHR10547:SF6">
    <property type="entry name" value="SEMENOGELIN-2"/>
    <property type="match status" value="1"/>
</dbReference>
<dbReference type="PANTHER" id="PTHR10547">
    <property type="entry name" value="SEMENOGELIN/SEMINAL VESICLE SECRETORY PROTEIN"/>
    <property type="match status" value="1"/>
</dbReference>
<dbReference type="Pfam" id="PF05474">
    <property type="entry name" value="Semenogelin"/>
    <property type="match status" value="1"/>
</dbReference>
<evidence type="ECO:0000250" key="1"/>
<evidence type="ECO:0000255" key="2"/>
<evidence type="ECO:0000256" key="3">
    <source>
        <dbReference type="SAM" id="MobiDB-lite"/>
    </source>
</evidence>
<evidence type="ECO:0000305" key="4"/>
<gene>
    <name type="primary">SEMG2</name>
</gene>
<keyword id="KW-1185">Reference proteome</keyword>
<keyword id="KW-0677">Repeat</keyword>
<keyword id="KW-0964">Secreted</keyword>
<keyword id="KW-0732">Signal</keyword>
<sequence length="474" mass="53286">MKSIILFVLSLLLILEKQAAVMGQKGGSKGQLPSGSSQFPHGQKGQHYFGQKDQQHTKSKGSFSIQHTYHVDINDHDRTRKSQQYDLNALHKATKSKQHLGGSQQLLNYKQEGRDHDKSKGHFHMIVIHHKGGQAHRGTQNPSQDQGNSPSGKGLSSQYSNTEKRLWVHGLSKEQASASGAQKGRTQGGSQSSYVLQTEELVVNKQQRETKNSHQNKGHYQNAVDVREEHSSKLQTSLHPAHQDRLQHGSKDIFTTQDELLVYNKNQHQTKNLNQDQEHGQKAHKISYQSSRTEERQLNHGEKSVQKDVSKGSISIQTEKKIHGKSQNQVTIHSQDQEHGHKENKMSHQSSSTEERHLNCGEKGIQKGVSKGSISIQTEEQIHGKSQNQVRIPSQAQEYGHKENKISYRSSSTEERRLNSGEKDVQKGVSKGSISIQTEEKIHGKSQNQVTIPSQDQEHGHKENKMSYQSSSTE</sequence>
<proteinExistence type="evidence at transcript level"/>